<sequence length="303" mass="33790">MASSSNYNTYMQYLNPPPYADHGANQLIPADQLSNQHGITPNYVGDLNLDDQFKGNVCHAFTLEAIIDISAYNERTVKGVPAWLPLGIMSNFEYPLAHTVAALLTGSYTITQFTHNGQKFVRVNRLGTGIPAHPLRMLREGNQAFIQNMVIPRNFSTNQFTYNLTNLVLSVQKLPDDAWRPSKDKLIGNTMHPAVSIHPNLPPIVLPTVKKQAYRQHKNPNNGPLLAISGILHQLRVEKVPEKTSLFRISLPADMFSVKEGMMKKRGESSPVVYFQAPENFPLNGFNNRQVVLAYANPTLSAI</sequence>
<organism>
    <name type="scientific">Lake Victoria marburgvirus (strain Ozolin-75)</name>
    <name type="common">MARV</name>
    <name type="synonym">Marburg virus (strain South Africa/Ozolin/1975)</name>
    <dbReference type="NCBI Taxonomy" id="482820"/>
    <lineage>
        <taxon>Viruses</taxon>
        <taxon>Riboviria</taxon>
        <taxon>Orthornavirae</taxon>
        <taxon>Negarnaviricota</taxon>
        <taxon>Haploviricotina</taxon>
        <taxon>Monjiviricetes</taxon>
        <taxon>Mononegavirales</taxon>
        <taxon>Filoviridae</taxon>
        <taxon>Orthomarburgvirus</taxon>
        <taxon>Orthomarburgvirus marburgense</taxon>
    </lineage>
</organism>
<keyword id="KW-1032">Host cell membrane</keyword>
<keyword id="KW-1039">Host endosome</keyword>
<keyword id="KW-1043">Host membrane</keyword>
<keyword id="KW-0945">Host-virus interaction</keyword>
<keyword id="KW-1090">Inhibition of host innate immune response by virus</keyword>
<keyword id="KW-1114">Inhibition of host interferon signaling pathway by virus</keyword>
<keyword id="KW-1096">Inhibition of host JAK1 by virus</keyword>
<keyword id="KW-0922">Interferon antiviral system evasion</keyword>
<keyword id="KW-0472">Membrane</keyword>
<keyword id="KW-1198">Viral budding</keyword>
<keyword id="KW-1187">Viral budding via the host ESCRT complexes</keyword>
<keyword id="KW-0899">Viral immunoevasion</keyword>
<keyword id="KW-0468">Viral matrix protein</keyword>
<keyword id="KW-1188">Viral release from host cell</keyword>
<keyword id="KW-0946">Virion</keyword>
<dbReference type="EMBL" id="AY358025">
    <property type="protein sequence ID" value="AAQ55257.1"/>
    <property type="molecule type" value="Genomic_RNA"/>
</dbReference>
<dbReference type="SMR" id="Q6UY67"/>
<dbReference type="IntAct" id="Q6UY67">
    <property type="interactions" value="8"/>
</dbReference>
<dbReference type="Proteomes" id="UP000000838">
    <property type="component" value="Genome"/>
</dbReference>
<dbReference type="GO" id="GO:0033645">
    <property type="term" value="C:host cell endomembrane system"/>
    <property type="evidence" value="ECO:0007669"/>
    <property type="project" value="UniProtKB-SubCell"/>
</dbReference>
<dbReference type="GO" id="GO:0044185">
    <property type="term" value="C:host cell late endosome membrane"/>
    <property type="evidence" value="ECO:0007669"/>
    <property type="project" value="UniProtKB-SubCell"/>
</dbReference>
<dbReference type="GO" id="GO:0020002">
    <property type="term" value="C:host cell plasma membrane"/>
    <property type="evidence" value="ECO:0007669"/>
    <property type="project" value="UniProtKB-SubCell"/>
</dbReference>
<dbReference type="GO" id="GO:0016020">
    <property type="term" value="C:membrane"/>
    <property type="evidence" value="ECO:0007669"/>
    <property type="project" value="UniProtKB-KW"/>
</dbReference>
<dbReference type="GO" id="GO:0055036">
    <property type="term" value="C:virion membrane"/>
    <property type="evidence" value="ECO:0007669"/>
    <property type="project" value="UniProtKB-SubCell"/>
</dbReference>
<dbReference type="GO" id="GO:0039660">
    <property type="term" value="F:structural constituent of virion"/>
    <property type="evidence" value="ECO:0007669"/>
    <property type="project" value="UniProtKB-KW"/>
</dbReference>
<dbReference type="GO" id="GO:0052170">
    <property type="term" value="P:symbiont-mediated suppression of host innate immune response"/>
    <property type="evidence" value="ECO:0007669"/>
    <property type="project" value="UniProtKB-KW"/>
</dbReference>
<dbReference type="GO" id="GO:0039576">
    <property type="term" value="P:symbiont-mediated suppression of host JAK-STAT cascade via inhibition of JAK1 activity"/>
    <property type="evidence" value="ECO:0007669"/>
    <property type="project" value="UniProtKB-KW"/>
</dbReference>
<dbReference type="GO" id="GO:0039502">
    <property type="term" value="P:symbiont-mediated suppression of host type I interferon-mediated signaling pathway"/>
    <property type="evidence" value="ECO:0007669"/>
    <property type="project" value="UniProtKB-KW"/>
</dbReference>
<dbReference type="GO" id="GO:0039702">
    <property type="term" value="P:viral budding via host ESCRT complex"/>
    <property type="evidence" value="ECO:0007669"/>
    <property type="project" value="UniProtKB-KW"/>
</dbReference>
<dbReference type="Gene3D" id="2.70.20.20">
    <property type="entry name" value="Matrix protein VP40, N-terminal domain"/>
    <property type="match status" value="1"/>
</dbReference>
<dbReference type="InterPro" id="IPR008986">
    <property type="entry name" value="EV_matrix"/>
</dbReference>
<dbReference type="InterPro" id="IPR043079">
    <property type="entry name" value="EV_matrix_protein_N"/>
</dbReference>
<dbReference type="InterPro" id="IPR038057">
    <property type="entry name" value="EV_matrix_sf"/>
</dbReference>
<dbReference type="Pfam" id="PF07447">
    <property type="entry name" value="Matrix_Filo"/>
    <property type="match status" value="1"/>
</dbReference>
<dbReference type="PIRSF" id="PIRSF018327">
    <property type="entry name" value="VP40_FiloV"/>
    <property type="match status" value="1"/>
</dbReference>
<dbReference type="SUPFAM" id="SSF50012">
    <property type="entry name" value="EV matrix protein"/>
    <property type="match status" value="1"/>
</dbReference>
<organismHost>
    <name type="scientific">Chlorocebus aethiops</name>
    <name type="common">Green monkey</name>
    <name type="synonym">Cercopithecus aethiops</name>
    <dbReference type="NCBI Taxonomy" id="9534"/>
</organismHost>
<organismHost>
    <name type="scientific">Homo sapiens</name>
    <name type="common">Human</name>
    <dbReference type="NCBI Taxonomy" id="9606"/>
</organismHost>
<organismHost>
    <name type="scientific">Rousettus aegyptiacus</name>
    <name type="common">Egyptian fruit bat</name>
    <name type="synonym">Pteropus aegyptiacus</name>
    <dbReference type="NCBI Taxonomy" id="9407"/>
</organismHost>
<gene>
    <name type="primary">VP40</name>
</gene>
<evidence type="ECO:0000250" key="1"/>
<evidence type="ECO:0000250" key="2">
    <source>
        <dbReference type="UniProtKB" id="P35260"/>
    </source>
</evidence>
<evidence type="ECO:0000250" key="3">
    <source>
        <dbReference type="UniProtKB" id="Q05128"/>
    </source>
</evidence>
<evidence type="ECO:0000305" key="4"/>
<accession>Q6UY67</accession>
<protein>
    <recommendedName>
        <fullName>Matrix protein VP40</fullName>
    </recommendedName>
    <alternativeName>
        <fullName evidence="2">Marburg VP40</fullName>
        <shortName evidence="2">mVP40</shortName>
    </alternativeName>
    <alternativeName>
        <fullName>Membrane-associated protein VP40</fullName>
    </alternativeName>
</protein>
<reference key="1">
    <citation type="submission" date="2003-08" db="EMBL/GenBank/DDBJ databases">
        <authorList>
            <person name="Bowen M.D."/>
            <person name="Thurman K."/>
            <person name="Minor E."/>
            <person name="Ibrahim M.S."/>
            <person name="Meyer R.F."/>
            <person name="Malfatti S.A."/>
            <person name="Do L.H."/>
            <person name="Smith K.L."/>
            <person name="McCready P.M."/>
            <person name="Chain P.S.G."/>
        </authorList>
    </citation>
    <scope>NUCLEOTIDE SEQUENCE [GENOMIC RNA]</scope>
</reference>
<feature type="chain" id="PRO_0000314999" description="Matrix protein VP40">
    <location>
        <begin position="1"/>
        <end position="303"/>
    </location>
</feature>
<feature type="short sequence motif" description="PPXY motif" evidence="1">
    <location>
        <begin position="16"/>
        <end position="19"/>
    </location>
</feature>
<name>VP40_MABVO</name>
<proteinExistence type="evidence at protein level"/>
<comment type="function">
    <text evidence="1 2">Plays an essential role virus particle assembly and budding. Promotes virus assembly and budding by interacting with host proteins of the multivesicular body pathway. The interaction with host E3 ubiquitin ligase SMURF2 facilitates virus budding (By similarity). The interaction with the nucleocapsid and the plasma membrane may also facilitate virus budding. Specific interactions with membrane-associated GP and VP24 during the budding process may also occur (By similarity). May play a role in genome replication (By similarity).</text>
</comment>
<comment type="subunit">
    <text evidence="2">Exists as a dimer until it reorganizes at the plasma membrane into multimeric form. Interacts with host TSG101. Interacts (via PPXY motif) with SMURF2 (via WW domains); the interaction positively regulates virus budding.</text>
</comment>
<comment type="interaction">
    <interactant intactId="EBI-40243922">
        <id>Q6UY67</id>
    </interactant>
    <interactant intactId="EBI-1564678">
        <id>Q96J02</id>
        <label>ITCH</label>
    </interactant>
    <organismsDiffer>true</organismsDiffer>
    <experiments>2</experiments>
</comment>
<comment type="subcellular location">
    <subcellularLocation>
        <location evidence="2">Virion membrane</location>
        <topology evidence="2">Peripheral membrane protein</topology>
    </subcellularLocation>
    <subcellularLocation>
        <location evidence="2">Host late endosome membrane</location>
        <topology evidence="2">Peripheral membrane protein</topology>
    </subcellularLocation>
    <subcellularLocation>
        <location evidence="2">Host cell membrane</location>
        <topology evidence="2">Peripheral membrane protein</topology>
        <orientation evidence="2">Cytoplasmic side</orientation>
    </subcellularLocation>
    <subcellularLocation>
        <location evidence="2">Host endomembrane system</location>
        <topology evidence="2">Peripheral membrane protein</topology>
    </subcellularLocation>
    <text evidence="2">In virion, localizes on the intravirional side of the membrane. In the host cell, it is found associated with virus-induced membrane proliferation foci and probably also in multivesicular bodies. These VP40-enriched membrane clusters are then redistributed to the plasma membrane where budding takes place.</text>
</comment>
<comment type="domain">
    <text evidence="2 3">Late-budding domains (L domains) are short sequence motifs essential for viral particle budding. They recruit proteins of the host ESCRT machinery (Endosomal Sorting Complex Required for Transport) or ESCRT-associated proteins. VP40 contains one L domain: a PPXY motif which potentially interacts with the WW domain 3 of NEDD4 E3 ubiquitin ligase and the three WW domains of SMURF2 E3 ubiquitin ligase.</text>
</comment>
<comment type="miscellaneous">
    <text>Most abundant protein in the virion.</text>
</comment>
<comment type="similarity">
    <text evidence="4">Belongs to the filoviridae matrix protein VP40 family.</text>
</comment>